<feature type="chain" id="PRO_0000118593" description="NADH-ubiquinone oxidoreductase 49 kDa subunit">
    <location>
        <begin position="1"/>
        <end position="396"/>
    </location>
</feature>
<gene>
    <name type="primary">NAD7</name>
</gene>
<accession>O21270</accession>
<keyword id="KW-0249">Electron transport</keyword>
<keyword id="KW-0496">Mitochondrion</keyword>
<keyword id="KW-0520">NAD</keyword>
<keyword id="KW-0560">Oxidoreductase</keyword>
<keyword id="KW-0679">Respiratory chain</keyword>
<keyword id="KW-1278">Translocase</keyword>
<keyword id="KW-0813">Transport</keyword>
<keyword id="KW-0830">Ubiquinone</keyword>
<evidence type="ECO:0000250" key="1"/>
<evidence type="ECO:0000305" key="2"/>
<reference key="1">
    <citation type="journal article" date="1997" name="Nature">
        <title>An ancestral mitochondrial DNA resembling a eubacterial genome in miniature.</title>
        <authorList>
            <person name="Lang B.F."/>
            <person name="Burger G."/>
            <person name="O'Kelly C.J."/>
            <person name="Cedergren R."/>
            <person name="Golding G.B."/>
            <person name="Lemieux C."/>
            <person name="Sankoff D."/>
            <person name="Turmel M."/>
            <person name="Gray M.W."/>
        </authorList>
    </citation>
    <scope>NUCLEOTIDE SEQUENCE [GENOMIC DNA]</scope>
    <source>
        <strain>ATCC 50394</strain>
    </source>
</reference>
<organism>
    <name type="scientific">Reclinomonas americana</name>
    <dbReference type="NCBI Taxonomy" id="48483"/>
    <lineage>
        <taxon>Eukaryota</taxon>
        <taxon>Discoba</taxon>
        <taxon>Jakobida</taxon>
        <taxon>Histionina</taxon>
        <taxon>Histionidae</taxon>
        <taxon>Reclinomonas</taxon>
    </lineage>
</organism>
<sequence>MQQKALTKKLKNFTMNFGPQHPAAHGVLRLVLELNGEVVNRADPHIGLLHRGTEKLIEYKNYLQALPYFDRLDYVSMMAQEHAYSLAVEKLLGCEVPKRAQYIRVLFCEITRILNHLMAVTTHALDVGAMTPFLWGFEEREKLMEFYERVSGARMHAAYIRPGGVSQDMPMGLSEDIYKFAKQFGSRIDEIEDVLSSNRIWKQRLVDIGTVSAEEALDWGFSGVMLRGSGIAWDLRKTQPYDVYDELEFDIPVGTKGDCYDRYLIRVEEMRQSLKLIMQCLNKMPTGVIKVDDKKISPPSRVDMKDSMEALIHHFKLYTEGYSVPIGETYTAVEAPKGEFGVYLVSDGSSKPYRCKIKAPGFSHLQGLNFMSKGHMIADVVTIIGTQDIVFGEVDR</sequence>
<comment type="function">
    <text evidence="1">Core subunit of the mitochondrial membrane respiratory chain NADH dehydrogenase (Complex I) that is believed to belong to the minimal assembly required for catalysis. Complex I functions in the transfer of electrons from NADH to the respiratory chain. The immediate electron acceptor for the enzyme is believed to be ubiquinone (By similarity). Component of the iron-sulfur (IP) fragment of the enzyme. Component of the iron-sulfur (IP) fragment of the enzyme.</text>
</comment>
<comment type="catalytic activity">
    <reaction>
        <text>a ubiquinone + NADH + 5 H(+)(in) = a ubiquinol + NAD(+) + 4 H(+)(out)</text>
        <dbReference type="Rhea" id="RHEA:29091"/>
        <dbReference type="Rhea" id="RHEA-COMP:9565"/>
        <dbReference type="Rhea" id="RHEA-COMP:9566"/>
        <dbReference type="ChEBI" id="CHEBI:15378"/>
        <dbReference type="ChEBI" id="CHEBI:16389"/>
        <dbReference type="ChEBI" id="CHEBI:17976"/>
        <dbReference type="ChEBI" id="CHEBI:57540"/>
        <dbReference type="ChEBI" id="CHEBI:57945"/>
        <dbReference type="EC" id="7.1.1.2"/>
    </reaction>
</comment>
<comment type="subcellular location">
    <subcellularLocation>
        <location>Mitochondrion</location>
    </subcellularLocation>
</comment>
<comment type="similarity">
    <text evidence="2">Belongs to the complex I 49 kDa subunit family.</text>
</comment>
<geneLocation type="mitochondrion"/>
<dbReference type="EC" id="7.1.1.2"/>
<dbReference type="EMBL" id="AF007261">
    <property type="protein sequence ID" value="AAD11897.1"/>
    <property type="molecule type" value="Genomic_DNA"/>
</dbReference>
<dbReference type="PIR" id="S78164">
    <property type="entry name" value="S78164"/>
</dbReference>
<dbReference type="RefSeq" id="NP_044782.1">
    <property type="nucleotide sequence ID" value="NC_001823.1"/>
</dbReference>
<dbReference type="SMR" id="O21270"/>
<dbReference type="GeneID" id="801113"/>
<dbReference type="GO" id="GO:0005739">
    <property type="term" value="C:mitochondrion"/>
    <property type="evidence" value="ECO:0007669"/>
    <property type="project" value="UniProtKB-SubCell"/>
</dbReference>
<dbReference type="GO" id="GO:0051287">
    <property type="term" value="F:NAD binding"/>
    <property type="evidence" value="ECO:0007669"/>
    <property type="project" value="InterPro"/>
</dbReference>
<dbReference type="GO" id="GO:0008137">
    <property type="term" value="F:NADH dehydrogenase (ubiquinone) activity"/>
    <property type="evidence" value="ECO:0007669"/>
    <property type="project" value="UniProtKB-EC"/>
</dbReference>
<dbReference type="GO" id="GO:0048038">
    <property type="term" value="F:quinone binding"/>
    <property type="evidence" value="ECO:0007669"/>
    <property type="project" value="InterPro"/>
</dbReference>
<dbReference type="GO" id="GO:0006120">
    <property type="term" value="P:mitochondrial electron transport, NADH to ubiquinone"/>
    <property type="evidence" value="ECO:0007669"/>
    <property type="project" value="TreeGrafter"/>
</dbReference>
<dbReference type="FunFam" id="1.10.645.10:FF:000005">
    <property type="entry name" value="NADH-quinone oxidoreductase subunit D"/>
    <property type="match status" value="1"/>
</dbReference>
<dbReference type="Gene3D" id="1.10.645.10">
    <property type="entry name" value="Cytochrome-c3 Hydrogenase, chain B"/>
    <property type="match status" value="1"/>
</dbReference>
<dbReference type="HAMAP" id="MF_01358">
    <property type="entry name" value="NDH1_NuoD"/>
    <property type="match status" value="1"/>
</dbReference>
<dbReference type="InterPro" id="IPR001135">
    <property type="entry name" value="NADH_Q_OxRdtase_suD"/>
</dbReference>
<dbReference type="InterPro" id="IPR014029">
    <property type="entry name" value="NADH_UbQ_OxRdtase_49kDa_CS"/>
</dbReference>
<dbReference type="InterPro" id="IPR022885">
    <property type="entry name" value="NDH1_su_D/H"/>
</dbReference>
<dbReference type="InterPro" id="IPR029014">
    <property type="entry name" value="NiFe-Hase_large"/>
</dbReference>
<dbReference type="NCBIfam" id="TIGR01962">
    <property type="entry name" value="NuoD"/>
    <property type="match status" value="1"/>
</dbReference>
<dbReference type="NCBIfam" id="NF004739">
    <property type="entry name" value="PRK06075.1"/>
    <property type="match status" value="1"/>
</dbReference>
<dbReference type="PANTHER" id="PTHR11993:SF10">
    <property type="entry name" value="NADH DEHYDROGENASE [UBIQUINONE] IRON-SULFUR PROTEIN 2, MITOCHONDRIAL"/>
    <property type="match status" value="1"/>
</dbReference>
<dbReference type="PANTHER" id="PTHR11993">
    <property type="entry name" value="NADH-UBIQUINONE OXIDOREDUCTASE 49 KDA SUBUNIT"/>
    <property type="match status" value="1"/>
</dbReference>
<dbReference type="Pfam" id="PF00346">
    <property type="entry name" value="Complex1_49kDa"/>
    <property type="match status" value="1"/>
</dbReference>
<dbReference type="SUPFAM" id="SSF56762">
    <property type="entry name" value="HydB/Nqo4-like"/>
    <property type="match status" value="1"/>
</dbReference>
<dbReference type="PROSITE" id="PS00535">
    <property type="entry name" value="COMPLEX1_49K"/>
    <property type="match status" value="1"/>
</dbReference>
<proteinExistence type="inferred from homology"/>
<name>NDUS2_RECAM</name>
<protein>
    <recommendedName>
        <fullName>NADH-ubiquinone oxidoreductase 49 kDa subunit</fullName>
        <ecNumber>7.1.1.2</ecNumber>
    </recommendedName>
    <alternativeName>
        <fullName>NADH dehydrogenase subunit 7</fullName>
    </alternativeName>
</protein>